<feature type="chain" id="PRO_0000288683" description="Palmitoyltransferase ZDHHC21">
    <location>
        <begin position="1"/>
        <end position="265"/>
    </location>
</feature>
<feature type="topological domain" description="Cytoplasmic" evidence="6">
    <location>
        <begin position="1"/>
        <end position="16"/>
    </location>
</feature>
<feature type="transmembrane region" description="Helical" evidence="4">
    <location>
        <begin position="17"/>
        <end position="37"/>
    </location>
</feature>
<feature type="topological domain" description="Extracellular" evidence="6">
    <location>
        <begin position="38"/>
        <end position="44"/>
    </location>
</feature>
<feature type="transmembrane region" description="Helical" evidence="4">
    <location>
        <begin position="45"/>
        <end position="65"/>
    </location>
</feature>
<feature type="topological domain" description="Cytoplasmic" evidence="6">
    <location>
        <begin position="66"/>
        <end position="133"/>
    </location>
</feature>
<feature type="transmembrane region" description="Helical" evidence="4">
    <location>
        <begin position="134"/>
        <end position="154"/>
    </location>
</feature>
<feature type="topological domain" description="Extracellular" evidence="6">
    <location>
        <begin position="155"/>
        <end position="185"/>
    </location>
</feature>
<feature type="transmembrane region" description="Helical" evidence="4">
    <location>
        <begin position="186"/>
        <end position="206"/>
    </location>
</feature>
<feature type="topological domain" description="Cytoplasmic" evidence="6">
    <location>
        <begin position="207"/>
        <end position="265"/>
    </location>
</feature>
<feature type="domain" description="DHHC" evidence="5">
    <location>
        <begin position="90"/>
        <end position="140"/>
    </location>
</feature>
<feature type="active site" description="S-palmitoyl cysteine intermediate" evidence="3">
    <location>
        <position position="120"/>
    </location>
</feature>
<dbReference type="EC" id="2.3.1.225" evidence="2"/>
<dbReference type="EMBL" id="BC133395">
    <property type="protein sequence ID" value="AAI33396.1"/>
    <property type="molecule type" value="mRNA"/>
</dbReference>
<dbReference type="RefSeq" id="NP_001075003.1">
    <property type="nucleotide sequence ID" value="NM_001081534.1"/>
</dbReference>
<dbReference type="RefSeq" id="XP_005209984.1">
    <property type="nucleotide sequence ID" value="XM_005209927.5"/>
</dbReference>
<dbReference type="RefSeq" id="XP_010806101.1">
    <property type="nucleotide sequence ID" value="XM_010807799.2"/>
</dbReference>
<dbReference type="RefSeq" id="XP_015327924.1">
    <property type="nucleotide sequence ID" value="XM_015472438.3"/>
</dbReference>
<dbReference type="RefSeq" id="XP_024851614.1">
    <property type="nucleotide sequence ID" value="XM_024995846.2"/>
</dbReference>
<dbReference type="RefSeq" id="XP_024851615.1">
    <property type="nucleotide sequence ID" value="XM_024995847.2"/>
</dbReference>
<dbReference type="RefSeq" id="XP_059745154.1">
    <property type="nucleotide sequence ID" value="XM_059889171.1"/>
</dbReference>
<dbReference type="SMR" id="A2VDT6"/>
<dbReference type="FunCoup" id="A2VDT6">
    <property type="interactions" value="1621"/>
</dbReference>
<dbReference type="STRING" id="9913.ENSBTAP00000064041"/>
<dbReference type="PaxDb" id="9913-ENSBTAP00000008139"/>
<dbReference type="Ensembl" id="ENSBTAT00000008139.6">
    <property type="protein sequence ID" value="ENSBTAP00000008139.5"/>
    <property type="gene ID" value="ENSBTAG00000006197.7"/>
</dbReference>
<dbReference type="GeneID" id="535814"/>
<dbReference type="KEGG" id="bta:535814"/>
<dbReference type="CTD" id="340481"/>
<dbReference type="VEuPathDB" id="HostDB:ENSBTAG00000006197"/>
<dbReference type="VGNC" id="VGNC:37137">
    <property type="gene designation" value="ZDHHC21"/>
</dbReference>
<dbReference type="eggNOG" id="KOG1311">
    <property type="taxonomic scope" value="Eukaryota"/>
</dbReference>
<dbReference type="GeneTree" id="ENSGT00940000158006"/>
<dbReference type="HOGENOM" id="CLU_048061_3_0_1"/>
<dbReference type="InParanoid" id="A2VDT6"/>
<dbReference type="OMA" id="HGERELW"/>
<dbReference type="OrthoDB" id="331948at2759"/>
<dbReference type="TreeFam" id="TF319798"/>
<dbReference type="Reactome" id="R-BTA-203615">
    <property type="pathway name" value="eNOS activation"/>
</dbReference>
<dbReference type="Reactome" id="R-BTA-9009391">
    <property type="pathway name" value="Extra-nuclear estrogen signaling"/>
</dbReference>
<dbReference type="Proteomes" id="UP000009136">
    <property type="component" value="Chromosome 8"/>
</dbReference>
<dbReference type="Bgee" id="ENSBTAG00000006197">
    <property type="expression patterns" value="Expressed in semen and 103 other cell types or tissues"/>
</dbReference>
<dbReference type="GO" id="GO:0005783">
    <property type="term" value="C:endoplasmic reticulum"/>
    <property type="evidence" value="ECO:0000318"/>
    <property type="project" value="GO_Central"/>
</dbReference>
<dbReference type="GO" id="GO:0005794">
    <property type="term" value="C:Golgi apparatus"/>
    <property type="evidence" value="ECO:0000250"/>
    <property type="project" value="UniProtKB"/>
</dbReference>
<dbReference type="GO" id="GO:0000139">
    <property type="term" value="C:Golgi membrane"/>
    <property type="evidence" value="ECO:0007669"/>
    <property type="project" value="UniProtKB-SubCell"/>
</dbReference>
<dbReference type="GO" id="GO:0005886">
    <property type="term" value="C:plasma membrane"/>
    <property type="evidence" value="ECO:0007669"/>
    <property type="project" value="UniProtKB-SubCell"/>
</dbReference>
<dbReference type="GO" id="GO:0019706">
    <property type="term" value="F:protein-cysteine S-palmitoyltransferase activity"/>
    <property type="evidence" value="ECO:0000250"/>
    <property type="project" value="UniProtKB"/>
</dbReference>
<dbReference type="GO" id="GO:0071875">
    <property type="term" value="P:adrenergic receptor signaling pathway"/>
    <property type="evidence" value="ECO:0000250"/>
    <property type="project" value="UniProtKB"/>
</dbReference>
<dbReference type="GO" id="GO:0018230">
    <property type="term" value="P:peptidyl-L-cysteine S-palmitoylation"/>
    <property type="evidence" value="ECO:0000250"/>
    <property type="project" value="UniProtKB"/>
</dbReference>
<dbReference type="GO" id="GO:0006612">
    <property type="term" value="P:protein targeting to membrane"/>
    <property type="evidence" value="ECO:0000318"/>
    <property type="project" value="GO_Central"/>
</dbReference>
<dbReference type="GO" id="GO:1903140">
    <property type="term" value="P:regulation of establishment of endothelial barrier"/>
    <property type="evidence" value="ECO:0000250"/>
    <property type="project" value="UniProtKB"/>
</dbReference>
<dbReference type="GO" id="GO:1904997">
    <property type="term" value="P:regulation of leukocyte adhesion to arterial endothelial cell"/>
    <property type="evidence" value="ECO:0000250"/>
    <property type="project" value="UniProtKB"/>
</dbReference>
<dbReference type="GO" id="GO:0003056">
    <property type="term" value="P:regulation of vascular associated smooth muscle contraction"/>
    <property type="evidence" value="ECO:0000250"/>
    <property type="project" value="UniProtKB"/>
</dbReference>
<dbReference type="InterPro" id="IPR001594">
    <property type="entry name" value="Palmitoyltrfase_DHHC"/>
</dbReference>
<dbReference type="InterPro" id="IPR039859">
    <property type="entry name" value="PFA4/ZDH16/20/ERF2-like"/>
</dbReference>
<dbReference type="PANTHER" id="PTHR22883:SF11">
    <property type="entry name" value="PALMITOYLTRANSFERASE ZDHHC21"/>
    <property type="match status" value="1"/>
</dbReference>
<dbReference type="PANTHER" id="PTHR22883">
    <property type="entry name" value="ZINC FINGER DHHC DOMAIN CONTAINING PROTEIN"/>
    <property type="match status" value="1"/>
</dbReference>
<dbReference type="Pfam" id="PF01529">
    <property type="entry name" value="DHHC"/>
    <property type="match status" value="1"/>
</dbReference>
<dbReference type="PROSITE" id="PS50216">
    <property type="entry name" value="DHHC"/>
    <property type="match status" value="1"/>
</dbReference>
<sequence length="265" mass="31463">MGLRIHFVVDPHGWCCMGLIVFVWLYNFFLIPKIVLFPHYEEGHIPGILIIIFYGIAMFCLVALVRASITDPGRLPENPKIPHGEREFWELCNKCNLMRPKRSHHCSRCGHCVRRMDHHCPWINNCVGEDNHWLFLQLCFYTELLTCYALMFSFCHYYYFLPLKKRNLDLFVVRHELAIMRLAAFMGITMLVGITGLFYTQLIGIITDTTSIEKMSNCCEEISRPRKPWQQTFSEVFGTRWKILWFIPFRRRQPLRVPYHFANHV</sequence>
<keyword id="KW-0012">Acyltransferase</keyword>
<keyword id="KW-1003">Cell membrane</keyword>
<keyword id="KW-0333">Golgi apparatus</keyword>
<keyword id="KW-0449">Lipoprotein</keyword>
<keyword id="KW-0472">Membrane</keyword>
<keyword id="KW-0564">Palmitate</keyword>
<keyword id="KW-1185">Reference proteome</keyword>
<keyword id="KW-0808">Transferase</keyword>
<keyword id="KW-0812">Transmembrane</keyword>
<keyword id="KW-1133">Transmembrane helix</keyword>
<proteinExistence type="evidence at transcript level"/>
<evidence type="ECO:0000250" key="1">
    <source>
        <dbReference type="UniProtKB" id="Q8IUH5"/>
    </source>
</evidence>
<evidence type="ECO:0000250" key="2">
    <source>
        <dbReference type="UniProtKB" id="Q8IVQ6"/>
    </source>
</evidence>
<evidence type="ECO:0000250" key="3">
    <source>
        <dbReference type="UniProtKB" id="Q9D270"/>
    </source>
</evidence>
<evidence type="ECO:0000255" key="4"/>
<evidence type="ECO:0000255" key="5">
    <source>
        <dbReference type="PROSITE-ProRule" id="PRU00067"/>
    </source>
</evidence>
<evidence type="ECO:0000305" key="6"/>
<reference key="1">
    <citation type="submission" date="2007-02" db="EMBL/GenBank/DDBJ databases">
        <authorList>
            <consortium name="NIH - Mammalian Gene Collection (MGC) project"/>
        </authorList>
    </citation>
    <scope>NUCLEOTIDE SEQUENCE [LARGE SCALE MRNA]</scope>
    <source>
        <strain>Hereford</strain>
        <tissue>Fetal skin</tissue>
    </source>
</reference>
<accession>A2VDT6</accession>
<organism>
    <name type="scientific">Bos taurus</name>
    <name type="common">Bovine</name>
    <dbReference type="NCBI Taxonomy" id="9913"/>
    <lineage>
        <taxon>Eukaryota</taxon>
        <taxon>Metazoa</taxon>
        <taxon>Chordata</taxon>
        <taxon>Craniata</taxon>
        <taxon>Vertebrata</taxon>
        <taxon>Euteleostomi</taxon>
        <taxon>Mammalia</taxon>
        <taxon>Eutheria</taxon>
        <taxon>Laurasiatheria</taxon>
        <taxon>Artiodactyla</taxon>
        <taxon>Ruminantia</taxon>
        <taxon>Pecora</taxon>
        <taxon>Bovidae</taxon>
        <taxon>Bovinae</taxon>
        <taxon>Bos</taxon>
    </lineage>
</organism>
<protein>
    <recommendedName>
        <fullName evidence="6">Palmitoyltransferase ZDHHC21</fullName>
        <ecNumber evidence="2">2.3.1.225</ecNumber>
    </recommendedName>
    <alternativeName>
        <fullName evidence="2">Zinc finger DHHC domain-containing protein 21</fullName>
    </alternativeName>
</protein>
<comment type="function">
    <text evidence="2 3">Palmitoyltransferase that catalyzes the addition of palmitate onto various protein substrates (By similarity). Palmitoylates sex steroid hormone receptors, including ESR1, PGR and AR, thereby regulating their targeting to the plasma membrane. This affects rapid intracellular signaling by sex hormones via ERK and AKT kinases and the generation of cAMP, but does not affect that mediated by their nuclear receptor (By similarity). Palmitoylates FYN, regulates its localization in hair follicles and plays a key role in epidermal homeostasis and hair follicle differentiation. Through the palmitoylation of PLCB1 and the regulation of PLCB1 downstream signaling may indirectly regulate the function of the endothelial barrier and the adhesion of leukocytes to the endothelium. Also has a palmitoyltransferase activity toward ADRA1D, positively regulating its activity and expression and may thereby play a role in vascular contraction. May also palmitoylate eNOS and LCK (By similarity).</text>
</comment>
<comment type="catalytic activity">
    <reaction evidence="3">
        <text>L-cysteinyl-[protein] + hexadecanoyl-CoA = S-hexadecanoyl-L-cysteinyl-[protein] + CoA</text>
        <dbReference type="Rhea" id="RHEA:36683"/>
        <dbReference type="Rhea" id="RHEA-COMP:10131"/>
        <dbReference type="Rhea" id="RHEA-COMP:11032"/>
        <dbReference type="ChEBI" id="CHEBI:29950"/>
        <dbReference type="ChEBI" id="CHEBI:57287"/>
        <dbReference type="ChEBI" id="CHEBI:57379"/>
        <dbReference type="ChEBI" id="CHEBI:74151"/>
        <dbReference type="EC" id="2.3.1.225"/>
    </reaction>
    <physiologicalReaction direction="left-to-right" evidence="3">
        <dbReference type="Rhea" id="RHEA:36684"/>
    </physiologicalReaction>
</comment>
<comment type="subcellular location">
    <subcellularLocation>
        <location evidence="2">Golgi apparatus membrane</location>
        <topology evidence="4">Multi-pass membrane protein</topology>
    </subcellularLocation>
    <subcellularLocation>
        <location evidence="3">Golgi apparatus</location>
        <location evidence="3">cis-Golgi network membrane</location>
        <topology evidence="4">Multi-pass membrane protein</topology>
    </subcellularLocation>
    <subcellularLocation>
        <location evidence="2">Cell membrane</location>
        <topology evidence="4">Multi-pass membrane protein</topology>
    </subcellularLocation>
</comment>
<comment type="domain">
    <text evidence="1">The DHHC domain is required for palmitoyltransferase activity.</text>
</comment>
<comment type="similarity">
    <text evidence="6">Belongs to the DHHC palmitoyltransferase family.</text>
</comment>
<gene>
    <name evidence="2" type="primary">ZDHHC21</name>
</gene>
<name>ZDH21_BOVIN</name>